<feature type="chain" id="PRO_0000416497" description="UPF0612 protein new22">
    <location>
        <begin position="1"/>
        <end position="78"/>
    </location>
</feature>
<comment type="similarity">
    <text evidence="1">Belongs to the UPF0612 family.</text>
</comment>
<accession>G2TRT2</accession>
<name>NEW22_SCHPO</name>
<organism>
    <name type="scientific">Schizosaccharomyces pombe (strain 972 / ATCC 24843)</name>
    <name type="common">Fission yeast</name>
    <dbReference type="NCBI Taxonomy" id="284812"/>
    <lineage>
        <taxon>Eukaryota</taxon>
        <taxon>Fungi</taxon>
        <taxon>Dikarya</taxon>
        <taxon>Ascomycota</taxon>
        <taxon>Taphrinomycotina</taxon>
        <taxon>Schizosaccharomycetes</taxon>
        <taxon>Schizosaccharomycetales</taxon>
        <taxon>Schizosaccharomycetaceae</taxon>
        <taxon>Schizosaccharomyces</taxon>
    </lineage>
</organism>
<protein>
    <recommendedName>
        <fullName>UPF0612 protein new22</fullName>
    </recommendedName>
</protein>
<keyword id="KW-1185">Reference proteome</keyword>
<gene>
    <name type="primary">new22</name>
    <name type="ORF">SPCP20C8.04</name>
</gene>
<reference key="1">
    <citation type="journal article" date="2002" name="Nature">
        <title>The genome sequence of Schizosaccharomyces pombe.</title>
        <authorList>
            <person name="Wood V."/>
            <person name="Gwilliam R."/>
            <person name="Rajandream M.A."/>
            <person name="Lyne M.H."/>
            <person name="Lyne R."/>
            <person name="Stewart A."/>
            <person name="Sgouros J.G."/>
            <person name="Peat N."/>
            <person name="Hayles J."/>
            <person name="Baker S.G."/>
            <person name="Basham D."/>
            <person name="Bowman S."/>
            <person name="Brooks K."/>
            <person name="Brown D."/>
            <person name="Brown S."/>
            <person name="Chillingworth T."/>
            <person name="Churcher C.M."/>
            <person name="Collins M."/>
            <person name="Connor R."/>
            <person name="Cronin A."/>
            <person name="Davis P."/>
            <person name="Feltwell T."/>
            <person name="Fraser A."/>
            <person name="Gentles S."/>
            <person name="Goble A."/>
            <person name="Hamlin N."/>
            <person name="Harris D.E."/>
            <person name="Hidalgo J."/>
            <person name="Hodgson G."/>
            <person name="Holroyd S."/>
            <person name="Hornsby T."/>
            <person name="Howarth S."/>
            <person name="Huckle E.J."/>
            <person name="Hunt S."/>
            <person name="Jagels K."/>
            <person name="James K.D."/>
            <person name="Jones L."/>
            <person name="Jones M."/>
            <person name="Leather S."/>
            <person name="McDonald S."/>
            <person name="McLean J."/>
            <person name="Mooney P."/>
            <person name="Moule S."/>
            <person name="Mungall K.L."/>
            <person name="Murphy L.D."/>
            <person name="Niblett D."/>
            <person name="Odell C."/>
            <person name="Oliver K."/>
            <person name="O'Neil S."/>
            <person name="Pearson D."/>
            <person name="Quail M.A."/>
            <person name="Rabbinowitsch E."/>
            <person name="Rutherford K.M."/>
            <person name="Rutter S."/>
            <person name="Saunders D."/>
            <person name="Seeger K."/>
            <person name="Sharp S."/>
            <person name="Skelton J."/>
            <person name="Simmonds M.N."/>
            <person name="Squares R."/>
            <person name="Squares S."/>
            <person name="Stevens K."/>
            <person name="Taylor K."/>
            <person name="Taylor R.G."/>
            <person name="Tivey A."/>
            <person name="Walsh S.V."/>
            <person name="Warren T."/>
            <person name="Whitehead S."/>
            <person name="Woodward J.R."/>
            <person name="Volckaert G."/>
            <person name="Aert R."/>
            <person name="Robben J."/>
            <person name="Grymonprez B."/>
            <person name="Weltjens I."/>
            <person name="Vanstreels E."/>
            <person name="Rieger M."/>
            <person name="Schaefer M."/>
            <person name="Mueller-Auer S."/>
            <person name="Gabel C."/>
            <person name="Fuchs M."/>
            <person name="Duesterhoeft A."/>
            <person name="Fritzc C."/>
            <person name="Holzer E."/>
            <person name="Moestl D."/>
            <person name="Hilbert H."/>
            <person name="Borzym K."/>
            <person name="Langer I."/>
            <person name="Beck A."/>
            <person name="Lehrach H."/>
            <person name="Reinhardt R."/>
            <person name="Pohl T.M."/>
            <person name="Eger P."/>
            <person name="Zimmermann W."/>
            <person name="Wedler H."/>
            <person name="Wambutt R."/>
            <person name="Purnelle B."/>
            <person name="Goffeau A."/>
            <person name="Cadieu E."/>
            <person name="Dreano S."/>
            <person name="Gloux S."/>
            <person name="Lelaure V."/>
            <person name="Mottier S."/>
            <person name="Galibert F."/>
            <person name="Aves S.J."/>
            <person name="Xiang Z."/>
            <person name="Hunt C."/>
            <person name="Moore K."/>
            <person name="Hurst S.M."/>
            <person name="Lucas M."/>
            <person name="Rochet M."/>
            <person name="Gaillardin C."/>
            <person name="Tallada V.A."/>
            <person name="Garzon A."/>
            <person name="Thode G."/>
            <person name="Daga R.R."/>
            <person name="Cruzado L."/>
            <person name="Jimenez J."/>
            <person name="Sanchez M."/>
            <person name="del Rey F."/>
            <person name="Benito J."/>
            <person name="Dominguez A."/>
            <person name="Revuelta J.L."/>
            <person name="Moreno S."/>
            <person name="Armstrong J."/>
            <person name="Forsburg S.L."/>
            <person name="Cerutti L."/>
            <person name="Lowe T."/>
            <person name="McCombie W.R."/>
            <person name="Paulsen I."/>
            <person name="Potashkin J."/>
            <person name="Shpakovski G.V."/>
            <person name="Ussery D."/>
            <person name="Barrell B.G."/>
            <person name="Nurse P."/>
        </authorList>
    </citation>
    <scope>NUCLEOTIDE SEQUENCE [LARGE SCALE GENOMIC DNA]</scope>
    <source>
        <strain>972 / ATCC 24843</strain>
    </source>
</reference>
<reference key="2">
    <citation type="journal article" date="2011" name="Genetics">
        <title>Augmented annotation of the Schizosaccharomyces pombe genome reveals additional genes required for growth and viability.</title>
        <authorList>
            <person name="Bitton D.A."/>
            <person name="Wood V."/>
            <person name="Scutt P.J."/>
            <person name="Grallert A."/>
            <person name="Yates T."/>
            <person name="Smith D.L."/>
            <person name="Hagan I.M."/>
            <person name="Miller C.J."/>
        </authorList>
    </citation>
    <scope>IDENTIFICATION</scope>
</reference>
<sequence length="78" mass="9054">MNDNNSCKLTMLTRRLENMTQEYGQPDLPVPFLNGDEPGKLKLPLSERHEDVDYLTKEQCIQYFNGYSIHLIPPRISS</sequence>
<evidence type="ECO:0000305" key="1"/>
<dbReference type="EMBL" id="CU329672">
    <property type="protein sequence ID" value="CCD31386.1"/>
    <property type="molecule type" value="Genomic_DNA"/>
</dbReference>
<dbReference type="RefSeq" id="XP_004001735.1">
    <property type="nucleotide sequence ID" value="XM_004001686.1"/>
</dbReference>
<dbReference type="SMR" id="G2TRT2"/>
<dbReference type="PaxDb" id="4896-SPCP20C8.04.1"/>
<dbReference type="EnsemblFungi" id="SPCP20C8.04.1">
    <property type="protein sequence ID" value="SPCP20C8.04.1:pep"/>
    <property type="gene ID" value="SPCP20C8.04"/>
</dbReference>
<dbReference type="PomBase" id="SPCP20C8.04">
    <property type="gene designation" value="new22"/>
</dbReference>
<dbReference type="VEuPathDB" id="FungiDB:SPCP20C8.04"/>
<dbReference type="HOGENOM" id="CLU_2623394_0_0_1"/>
<dbReference type="InParanoid" id="G2TRT2"/>
<dbReference type="PRO" id="PR:G2TRT2"/>
<dbReference type="Proteomes" id="UP000002485">
    <property type="component" value="Chromosome III"/>
</dbReference>
<dbReference type="InterPro" id="IPR013902">
    <property type="entry name" value="Mug135-like_C"/>
</dbReference>
<dbReference type="Pfam" id="PF08593">
    <property type="entry name" value="Mug135_C"/>
    <property type="match status" value="1"/>
</dbReference>
<proteinExistence type="inferred from homology"/>